<proteinExistence type="inferred from homology"/>
<name>ISPD_VIBVU</name>
<organism>
    <name type="scientific">Vibrio vulnificus (strain CMCP6)</name>
    <dbReference type="NCBI Taxonomy" id="216895"/>
    <lineage>
        <taxon>Bacteria</taxon>
        <taxon>Pseudomonadati</taxon>
        <taxon>Pseudomonadota</taxon>
        <taxon>Gammaproteobacteria</taxon>
        <taxon>Vibrionales</taxon>
        <taxon>Vibrionaceae</taxon>
        <taxon>Vibrio</taxon>
    </lineage>
</organism>
<gene>
    <name evidence="1" type="primary">ispD</name>
    <name type="ordered locus">VV1_1582</name>
</gene>
<accession>Q8DC60</accession>
<protein>
    <recommendedName>
        <fullName evidence="1">2-C-methyl-D-erythritol 4-phosphate cytidylyltransferase</fullName>
        <ecNumber evidence="1">2.7.7.60</ecNumber>
    </recommendedName>
    <alternativeName>
        <fullName evidence="1">4-diphosphocytidyl-2C-methyl-D-erythritol synthase</fullName>
    </alternativeName>
    <alternativeName>
        <fullName evidence="1">MEP cytidylyltransferase</fullName>
        <shortName evidence="1">MCT</shortName>
    </alternativeName>
</protein>
<reference key="1">
    <citation type="submission" date="2002-12" db="EMBL/GenBank/DDBJ databases">
        <title>Complete genome sequence of Vibrio vulnificus CMCP6.</title>
        <authorList>
            <person name="Rhee J.H."/>
            <person name="Kim S.Y."/>
            <person name="Chung S.S."/>
            <person name="Kim J.J."/>
            <person name="Moon Y.H."/>
            <person name="Jeong H."/>
            <person name="Choy H.E."/>
        </authorList>
    </citation>
    <scope>NUCLEOTIDE SEQUENCE [LARGE SCALE GENOMIC DNA]</scope>
    <source>
        <strain>CMCP6</strain>
    </source>
</reference>
<comment type="function">
    <text evidence="1">Catalyzes the formation of 4-diphosphocytidyl-2-C-methyl-D-erythritol from CTP and 2-C-methyl-D-erythritol 4-phosphate (MEP).</text>
</comment>
<comment type="catalytic activity">
    <reaction evidence="1">
        <text>2-C-methyl-D-erythritol 4-phosphate + CTP + H(+) = 4-CDP-2-C-methyl-D-erythritol + diphosphate</text>
        <dbReference type="Rhea" id="RHEA:13429"/>
        <dbReference type="ChEBI" id="CHEBI:15378"/>
        <dbReference type="ChEBI" id="CHEBI:33019"/>
        <dbReference type="ChEBI" id="CHEBI:37563"/>
        <dbReference type="ChEBI" id="CHEBI:57823"/>
        <dbReference type="ChEBI" id="CHEBI:58262"/>
        <dbReference type="EC" id="2.7.7.60"/>
    </reaction>
</comment>
<comment type="pathway">
    <text evidence="1">Isoprenoid biosynthesis; isopentenyl diphosphate biosynthesis via DXP pathway; isopentenyl diphosphate from 1-deoxy-D-xylulose 5-phosphate: step 2/6.</text>
</comment>
<comment type="similarity">
    <text evidence="1">Belongs to the IspD/TarI cytidylyltransferase family. IspD subfamily.</text>
</comment>
<evidence type="ECO:0000255" key="1">
    <source>
        <dbReference type="HAMAP-Rule" id="MF_00108"/>
    </source>
</evidence>
<dbReference type="EC" id="2.7.7.60" evidence="1"/>
<dbReference type="EMBL" id="AE016795">
    <property type="protein sequence ID" value="AAO10005.1"/>
    <property type="molecule type" value="Genomic_DNA"/>
</dbReference>
<dbReference type="RefSeq" id="WP_011079515.1">
    <property type="nucleotide sequence ID" value="NC_004459.3"/>
</dbReference>
<dbReference type="SMR" id="Q8DC60"/>
<dbReference type="KEGG" id="vvu:VV1_1582"/>
<dbReference type="HOGENOM" id="CLU_061281_3_1_6"/>
<dbReference type="UniPathway" id="UPA00056">
    <property type="reaction ID" value="UER00093"/>
</dbReference>
<dbReference type="Proteomes" id="UP000002275">
    <property type="component" value="Chromosome 1"/>
</dbReference>
<dbReference type="GO" id="GO:0050518">
    <property type="term" value="F:2-C-methyl-D-erythritol 4-phosphate cytidylyltransferase activity"/>
    <property type="evidence" value="ECO:0007669"/>
    <property type="project" value="UniProtKB-UniRule"/>
</dbReference>
<dbReference type="GO" id="GO:0019288">
    <property type="term" value="P:isopentenyl diphosphate biosynthetic process, methylerythritol 4-phosphate pathway"/>
    <property type="evidence" value="ECO:0007669"/>
    <property type="project" value="UniProtKB-UniRule"/>
</dbReference>
<dbReference type="CDD" id="cd02516">
    <property type="entry name" value="CDP-ME_synthetase"/>
    <property type="match status" value="1"/>
</dbReference>
<dbReference type="FunFam" id="3.90.550.10:FF:000003">
    <property type="entry name" value="2-C-methyl-D-erythritol 4-phosphate cytidylyltransferase"/>
    <property type="match status" value="1"/>
</dbReference>
<dbReference type="Gene3D" id="3.90.550.10">
    <property type="entry name" value="Spore Coat Polysaccharide Biosynthesis Protein SpsA, Chain A"/>
    <property type="match status" value="1"/>
</dbReference>
<dbReference type="HAMAP" id="MF_00108">
    <property type="entry name" value="IspD"/>
    <property type="match status" value="1"/>
</dbReference>
<dbReference type="InterPro" id="IPR001228">
    <property type="entry name" value="IspD"/>
</dbReference>
<dbReference type="InterPro" id="IPR034683">
    <property type="entry name" value="IspD/TarI"/>
</dbReference>
<dbReference type="InterPro" id="IPR050088">
    <property type="entry name" value="IspD/TarI_cytidylyltransf_bact"/>
</dbReference>
<dbReference type="InterPro" id="IPR018294">
    <property type="entry name" value="ISPD_synthase_CS"/>
</dbReference>
<dbReference type="InterPro" id="IPR029044">
    <property type="entry name" value="Nucleotide-diphossugar_trans"/>
</dbReference>
<dbReference type="NCBIfam" id="TIGR00453">
    <property type="entry name" value="ispD"/>
    <property type="match status" value="1"/>
</dbReference>
<dbReference type="PANTHER" id="PTHR32125">
    <property type="entry name" value="2-C-METHYL-D-ERYTHRITOL 4-PHOSPHATE CYTIDYLYLTRANSFERASE, CHLOROPLASTIC"/>
    <property type="match status" value="1"/>
</dbReference>
<dbReference type="PANTHER" id="PTHR32125:SF4">
    <property type="entry name" value="2-C-METHYL-D-ERYTHRITOL 4-PHOSPHATE CYTIDYLYLTRANSFERASE, CHLOROPLASTIC"/>
    <property type="match status" value="1"/>
</dbReference>
<dbReference type="Pfam" id="PF01128">
    <property type="entry name" value="IspD"/>
    <property type="match status" value="1"/>
</dbReference>
<dbReference type="SUPFAM" id="SSF53448">
    <property type="entry name" value="Nucleotide-diphospho-sugar transferases"/>
    <property type="match status" value="1"/>
</dbReference>
<dbReference type="PROSITE" id="PS01295">
    <property type="entry name" value="ISPD"/>
    <property type="match status" value="1"/>
</dbReference>
<sequence length="237" mass="26006">MARSMTSLVAVVPAAGVGSRMKADRPKQYLQIHGKTILEHTIERLLSHPAITQVVVAVSEDDPYYSELAIAQHPDIVRVAGGKERADSVLSALRFLSLQQQKADWVLVHDAARPCVAHQDIDALIERCSSHETGGILATPVRDTMKRANAQQMIDHTVDRNALWHALTPQMFKAEVLTDALSDALAQGVAITDEASALEWRGELPALVQGCSSNIKVTQPEDLALAEFYLSREKDRK</sequence>
<feature type="chain" id="PRO_0000075646" description="2-C-methyl-D-erythritol 4-phosphate cytidylyltransferase">
    <location>
        <begin position="1"/>
        <end position="237"/>
    </location>
</feature>
<feature type="site" description="Transition state stabilizer" evidence="1">
    <location>
        <position position="20"/>
    </location>
</feature>
<feature type="site" description="Transition state stabilizer" evidence="1">
    <location>
        <position position="27"/>
    </location>
</feature>
<feature type="site" description="Positions MEP for the nucleophilic attack" evidence="1">
    <location>
        <position position="160"/>
    </location>
</feature>
<feature type="site" description="Positions MEP for the nucleophilic attack" evidence="1">
    <location>
        <position position="216"/>
    </location>
</feature>
<keyword id="KW-0414">Isoprene biosynthesis</keyword>
<keyword id="KW-0548">Nucleotidyltransferase</keyword>
<keyword id="KW-0808">Transferase</keyword>